<name>NU2C_PROM2</name>
<accession>A8G3E9</accession>
<gene>
    <name evidence="1" type="primary">ndhB</name>
    <name type="ordered locus">P9215_05141</name>
</gene>
<dbReference type="EC" id="7.1.1.-" evidence="1"/>
<dbReference type="EMBL" id="CP000825">
    <property type="protein sequence ID" value="ABV50130.1"/>
    <property type="molecule type" value="Genomic_DNA"/>
</dbReference>
<dbReference type="RefSeq" id="WP_012007263.1">
    <property type="nucleotide sequence ID" value="NC_009840.1"/>
</dbReference>
<dbReference type="SMR" id="A8G3E9"/>
<dbReference type="STRING" id="93060.P9215_05141"/>
<dbReference type="KEGG" id="pmh:P9215_05141"/>
<dbReference type="eggNOG" id="COG1007">
    <property type="taxonomic scope" value="Bacteria"/>
</dbReference>
<dbReference type="HOGENOM" id="CLU_007100_1_2_3"/>
<dbReference type="OrthoDB" id="9811718at2"/>
<dbReference type="Proteomes" id="UP000002014">
    <property type="component" value="Chromosome"/>
</dbReference>
<dbReference type="GO" id="GO:0031676">
    <property type="term" value="C:plasma membrane-derived thylakoid membrane"/>
    <property type="evidence" value="ECO:0007669"/>
    <property type="project" value="UniProtKB-SubCell"/>
</dbReference>
<dbReference type="GO" id="GO:0008137">
    <property type="term" value="F:NADH dehydrogenase (ubiquinone) activity"/>
    <property type="evidence" value="ECO:0007669"/>
    <property type="project" value="InterPro"/>
</dbReference>
<dbReference type="GO" id="GO:0048038">
    <property type="term" value="F:quinone binding"/>
    <property type="evidence" value="ECO:0007669"/>
    <property type="project" value="UniProtKB-KW"/>
</dbReference>
<dbReference type="GO" id="GO:0042773">
    <property type="term" value="P:ATP synthesis coupled electron transport"/>
    <property type="evidence" value="ECO:0007669"/>
    <property type="project" value="InterPro"/>
</dbReference>
<dbReference type="GO" id="GO:0019684">
    <property type="term" value="P:photosynthesis, light reaction"/>
    <property type="evidence" value="ECO:0007669"/>
    <property type="project" value="UniProtKB-UniRule"/>
</dbReference>
<dbReference type="HAMAP" id="MF_00445">
    <property type="entry name" value="NDH1_NuoN_1"/>
    <property type="match status" value="1"/>
</dbReference>
<dbReference type="InterPro" id="IPR010096">
    <property type="entry name" value="NADH-Q_OxRdtase_suN/2"/>
</dbReference>
<dbReference type="InterPro" id="IPR001750">
    <property type="entry name" value="ND/Mrp_TM"/>
</dbReference>
<dbReference type="NCBIfam" id="TIGR01770">
    <property type="entry name" value="NDH_I_N"/>
    <property type="match status" value="1"/>
</dbReference>
<dbReference type="NCBIfam" id="NF002701">
    <property type="entry name" value="PRK02504.1"/>
    <property type="match status" value="1"/>
</dbReference>
<dbReference type="PANTHER" id="PTHR22773">
    <property type="entry name" value="NADH DEHYDROGENASE"/>
    <property type="match status" value="1"/>
</dbReference>
<dbReference type="Pfam" id="PF00361">
    <property type="entry name" value="Proton_antipo_M"/>
    <property type="match status" value="1"/>
</dbReference>
<reference key="1">
    <citation type="journal article" date="2007" name="PLoS Genet.">
        <title>Patterns and implications of gene gain and loss in the evolution of Prochlorococcus.</title>
        <authorList>
            <person name="Kettler G.C."/>
            <person name="Martiny A.C."/>
            <person name="Huang K."/>
            <person name="Zucker J."/>
            <person name="Coleman M.L."/>
            <person name="Rodrigue S."/>
            <person name="Chen F."/>
            <person name="Lapidus A."/>
            <person name="Ferriera S."/>
            <person name="Johnson J."/>
            <person name="Steglich C."/>
            <person name="Church G.M."/>
            <person name="Richardson P."/>
            <person name="Chisholm S.W."/>
        </authorList>
    </citation>
    <scope>NUCLEOTIDE SEQUENCE [LARGE SCALE GENOMIC DNA]</scope>
    <source>
        <strain>MIT 9215</strain>
    </source>
</reference>
<keyword id="KW-0472">Membrane</keyword>
<keyword id="KW-0520">NAD</keyword>
<keyword id="KW-0521">NADP</keyword>
<keyword id="KW-0618">Plastoquinone</keyword>
<keyword id="KW-0874">Quinone</keyword>
<keyword id="KW-0793">Thylakoid</keyword>
<keyword id="KW-1278">Translocase</keyword>
<keyword id="KW-0812">Transmembrane</keyword>
<keyword id="KW-1133">Transmembrane helix</keyword>
<keyword id="KW-0813">Transport</keyword>
<comment type="function">
    <text evidence="1">NDH-1 shuttles electrons from an unknown electron donor, via FMN and iron-sulfur (Fe-S) centers, to quinones in the respiratory and/or the photosynthetic chain. The immediate electron acceptor for the enzyme in this species is believed to be plastoquinone. Couples the redox reaction to proton translocation, and thus conserves the redox energy in a proton gradient. Cyanobacterial NDH-1 also plays a role in inorganic carbon-concentration.</text>
</comment>
<comment type="catalytic activity">
    <reaction evidence="1">
        <text>a plastoquinone + NADH + (n+1) H(+)(in) = a plastoquinol + NAD(+) + n H(+)(out)</text>
        <dbReference type="Rhea" id="RHEA:42608"/>
        <dbReference type="Rhea" id="RHEA-COMP:9561"/>
        <dbReference type="Rhea" id="RHEA-COMP:9562"/>
        <dbReference type="ChEBI" id="CHEBI:15378"/>
        <dbReference type="ChEBI" id="CHEBI:17757"/>
        <dbReference type="ChEBI" id="CHEBI:57540"/>
        <dbReference type="ChEBI" id="CHEBI:57945"/>
        <dbReference type="ChEBI" id="CHEBI:62192"/>
    </reaction>
</comment>
<comment type="catalytic activity">
    <reaction evidence="1">
        <text>a plastoquinone + NADPH + (n+1) H(+)(in) = a plastoquinol + NADP(+) + n H(+)(out)</text>
        <dbReference type="Rhea" id="RHEA:42612"/>
        <dbReference type="Rhea" id="RHEA-COMP:9561"/>
        <dbReference type="Rhea" id="RHEA-COMP:9562"/>
        <dbReference type="ChEBI" id="CHEBI:15378"/>
        <dbReference type="ChEBI" id="CHEBI:17757"/>
        <dbReference type="ChEBI" id="CHEBI:57783"/>
        <dbReference type="ChEBI" id="CHEBI:58349"/>
        <dbReference type="ChEBI" id="CHEBI:62192"/>
    </reaction>
</comment>
<comment type="subunit">
    <text evidence="1">NDH-1 can be composed of about 15 different subunits; different subcomplexes with different compositions have been identified which probably have different functions.</text>
</comment>
<comment type="subcellular location">
    <subcellularLocation>
        <location evidence="1">Cellular thylakoid membrane</location>
        <topology evidence="1">Multi-pass membrane protein</topology>
    </subcellularLocation>
</comment>
<comment type="similarity">
    <text evidence="1">Belongs to the complex I subunit 2 family.</text>
</comment>
<proteinExistence type="inferred from homology"/>
<evidence type="ECO:0000255" key="1">
    <source>
        <dbReference type="HAMAP-Rule" id="MF_00445"/>
    </source>
</evidence>
<sequence length="506" mass="54073">MPNEIFTINLNAQAIIPEAFILLGIVGTLLVDLAGEKTASKWAPIICYLSIGSSLLSLALQWSNPVESAFLGSFNSDNLAISFRAIISLSTLVSLLISWRYTEQSGSPIGEFAAIVLSATLGAMLLCGSTDLISVFISLETLSVASYLLSGYLKRDPRSSEAALKYLLVGSAAAAVYLYGSSFLYGLSGSTNLATIGLEIINKPSFITSLALVFVLSTVAFKIAAVPFHQWTPDVYEGSPTPVVAFLSVGSKTAGFAFAIRILSTTFSSFDEEWKLLFTILAILSMALGNVVALAQTSMKRMLAYSSIGQAGFVMIGIVSGTQDGLSAAVLYLAAYLFMNLGAFSCVILFSLRTGSDRILDYSGLYQKDPLITLGLSLCLLSLGGLPPMLGFFGKIYLFFAGWANHQYLLVIVGLVTSVISIYYYISVIKMMVVKEPQEASEIVKSYPEINWGIVGLPPLRVALYTCVAVTALGGILSNPLFKLANTAVSETPFLQDIIATANNIS</sequence>
<organism>
    <name type="scientific">Prochlorococcus marinus (strain MIT 9215)</name>
    <dbReference type="NCBI Taxonomy" id="93060"/>
    <lineage>
        <taxon>Bacteria</taxon>
        <taxon>Bacillati</taxon>
        <taxon>Cyanobacteriota</taxon>
        <taxon>Cyanophyceae</taxon>
        <taxon>Synechococcales</taxon>
        <taxon>Prochlorococcaceae</taxon>
        <taxon>Prochlorococcus</taxon>
    </lineage>
</organism>
<feature type="chain" id="PRO_0000344257" description="NAD(P)H-quinone oxidoreductase subunit 2">
    <location>
        <begin position="1"/>
        <end position="506"/>
    </location>
</feature>
<feature type="transmembrane region" description="Helical" evidence="1">
    <location>
        <begin position="14"/>
        <end position="34"/>
    </location>
</feature>
<feature type="transmembrane region" description="Helical" evidence="1">
    <location>
        <begin position="42"/>
        <end position="62"/>
    </location>
</feature>
<feature type="transmembrane region" description="Helical" evidence="1">
    <location>
        <begin position="79"/>
        <end position="99"/>
    </location>
</feature>
<feature type="transmembrane region" description="Helical" evidence="1">
    <location>
        <begin position="108"/>
        <end position="128"/>
    </location>
</feature>
<feature type="transmembrane region" description="Helical" evidence="1">
    <location>
        <begin position="132"/>
        <end position="152"/>
    </location>
</feature>
<feature type="transmembrane region" description="Helical" evidence="1">
    <location>
        <begin position="167"/>
        <end position="187"/>
    </location>
</feature>
<feature type="transmembrane region" description="Helical" evidence="1">
    <location>
        <begin position="206"/>
        <end position="226"/>
    </location>
</feature>
<feature type="transmembrane region" description="Helical" evidence="1">
    <location>
        <begin position="240"/>
        <end position="260"/>
    </location>
</feature>
<feature type="transmembrane region" description="Helical" evidence="1">
    <location>
        <begin position="276"/>
        <end position="296"/>
    </location>
</feature>
<feature type="transmembrane region" description="Helical" evidence="1">
    <location>
        <begin position="302"/>
        <end position="322"/>
    </location>
</feature>
<feature type="transmembrane region" description="Helical" evidence="1">
    <location>
        <begin position="330"/>
        <end position="350"/>
    </location>
</feature>
<feature type="transmembrane region" description="Helical" evidence="1">
    <location>
        <begin position="374"/>
        <end position="394"/>
    </location>
</feature>
<feature type="transmembrane region" description="Helical" evidence="1">
    <location>
        <begin position="409"/>
        <end position="429"/>
    </location>
</feature>
<protein>
    <recommendedName>
        <fullName evidence="1">NAD(P)H-quinone oxidoreductase subunit 2</fullName>
        <ecNumber evidence="1">7.1.1.-</ecNumber>
    </recommendedName>
    <alternativeName>
        <fullName evidence="1">NAD(P)H dehydrogenase subunit 2</fullName>
    </alternativeName>
    <alternativeName>
        <fullName evidence="1">NADH-plastoquinone oxidoreductase subunit 2</fullName>
    </alternativeName>
    <alternativeName>
        <fullName evidence="1">NDH-1, subunit 2</fullName>
    </alternativeName>
</protein>